<name>HIPL1_ARATH</name>
<dbReference type="EMBL" id="AC008263">
    <property type="protein sequence ID" value="AAD55298.1"/>
    <property type="status" value="ALT_SEQ"/>
    <property type="molecule type" value="Genomic_DNA"/>
</dbReference>
<dbReference type="EMBL" id="CP002684">
    <property type="protein sequence ID" value="AEE35632.1"/>
    <property type="molecule type" value="Genomic_DNA"/>
</dbReference>
<dbReference type="PIR" id="C96777">
    <property type="entry name" value="C96777"/>
</dbReference>
<dbReference type="RefSeq" id="NP_177617.2">
    <property type="nucleotide sequence ID" value="NM_106137.5"/>
</dbReference>
<dbReference type="SMR" id="Q9SSG3"/>
<dbReference type="FunCoup" id="Q9SSG3">
    <property type="interactions" value="91"/>
</dbReference>
<dbReference type="STRING" id="3702.Q9SSG3"/>
<dbReference type="GlyCosmos" id="Q9SSG3">
    <property type="glycosylation" value="15 sites, No reported glycans"/>
</dbReference>
<dbReference type="GlyGen" id="Q9SSG3">
    <property type="glycosylation" value="15 sites"/>
</dbReference>
<dbReference type="SwissPalm" id="Q9SSG3"/>
<dbReference type="PaxDb" id="3702-AT1G74790.1"/>
<dbReference type="ProteomicsDB" id="230133"/>
<dbReference type="EnsemblPlants" id="AT1G74790.1">
    <property type="protein sequence ID" value="AT1G74790.1"/>
    <property type="gene ID" value="AT1G74790"/>
</dbReference>
<dbReference type="GeneID" id="843818"/>
<dbReference type="Gramene" id="AT1G74790.1">
    <property type="protein sequence ID" value="AT1G74790.1"/>
    <property type="gene ID" value="AT1G74790"/>
</dbReference>
<dbReference type="KEGG" id="ath:AT1G74790"/>
<dbReference type="Araport" id="AT1G74790"/>
<dbReference type="TAIR" id="AT1G74790"/>
<dbReference type="eggNOG" id="ENOG502QQKP">
    <property type="taxonomic scope" value="Eukaryota"/>
</dbReference>
<dbReference type="HOGENOM" id="CLU_024721_0_0_1"/>
<dbReference type="InParanoid" id="Q9SSG3"/>
<dbReference type="OMA" id="YSVEVRY"/>
<dbReference type="PhylomeDB" id="Q9SSG3"/>
<dbReference type="PRO" id="PR:Q9SSG3"/>
<dbReference type="Proteomes" id="UP000006548">
    <property type="component" value="Chromosome 1"/>
</dbReference>
<dbReference type="ExpressionAtlas" id="Q9SSG3">
    <property type="expression patterns" value="baseline and differential"/>
</dbReference>
<dbReference type="GO" id="GO:0005739">
    <property type="term" value="C:mitochondrion"/>
    <property type="evidence" value="ECO:0007005"/>
    <property type="project" value="TAIR"/>
</dbReference>
<dbReference type="GO" id="GO:0005886">
    <property type="term" value="C:plasma membrane"/>
    <property type="evidence" value="ECO:0007005"/>
    <property type="project" value="TAIR"/>
</dbReference>
<dbReference type="GO" id="GO:0098552">
    <property type="term" value="C:side of membrane"/>
    <property type="evidence" value="ECO:0007669"/>
    <property type="project" value="UniProtKB-KW"/>
</dbReference>
<dbReference type="GO" id="GO:0016491">
    <property type="term" value="F:oxidoreductase activity"/>
    <property type="evidence" value="ECO:0007669"/>
    <property type="project" value="UniProtKB-KW"/>
</dbReference>
<dbReference type="FunFam" id="2.120.10.30:FF:000067">
    <property type="entry name" value="HHIP-like 1"/>
    <property type="match status" value="1"/>
</dbReference>
<dbReference type="Gene3D" id="2.120.10.30">
    <property type="entry name" value="TolB, C-terminal domain"/>
    <property type="match status" value="1"/>
</dbReference>
<dbReference type="InterPro" id="IPR011042">
    <property type="entry name" value="6-blade_b-propeller_TolB-like"/>
</dbReference>
<dbReference type="InterPro" id="IPR012938">
    <property type="entry name" value="Glc/Sorbosone_DH"/>
</dbReference>
<dbReference type="InterPro" id="IPR011041">
    <property type="entry name" value="Quinoprot_gluc/sorb_DH_b-prop"/>
</dbReference>
<dbReference type="PANTHER" id="PTHR19328">
    <property type="entry name" value="HEDGEHOG-INTERACTING PROTEIN"/>
    <property type="match status" value="1"/>
</dbReference>
<dbReference type="PANTHER" id="PTHR19328:SF13">
    <property type="entry name" value="HIPL1 PROTEIN"/>
    <property type="match status" value="1"/>
</dbReference>
<dbReference type="Pfam" id="PF07995">
    <property type="entry name" value="GSDH"/>
    <property type="match status" value="1"/>
</dbReference>
<dbReference type="SUPFAM" id="SSF50952">
    <property type="entry name" value="Soluble quinoprotein glucose dehydrogenase"/>
    <property type="match status" value="1"/>
</dbReference>
<feature type="signal peptide" evidence="1">
    <location>
        <begin position="1"/>
        <end position="23"/>
    </location>
</feature>
<feature type="chain" id="PRO_0000025585" description="HIPL1 protein">
    <location>
        <begin position="24"/>
        <end position="665"/>
    </location>
</feature>
<feature type="propeptide" id="PRO_0000025586" description="Removed in mature form" evidence="2">
    <location>
        <begin position="666"/>
        <end position="695"/>
    </location>
</feature>
<feature type="lipid moiety-binding region" description="GPI-anchor amidated serine" evidence="1">
    <location>
        <position position="665"/>
    </location>
</feature>
<feature type="glycosylation site" description="N-linked (GlcNAc...) asparagine" evidence="1">
    <location>
        <position position="37"/>
    </location>
</feature>
<feature type="glycosylation site" description="N-linked (GlcNAc...) asparagine" evidence="1">
    <location>
        <position position="67"/>
    </location>
</feature>
<feature type="glycosylation site" description="N-linked (GlcNAc...) asparagine" evidence="1">
    <location>
        <position position="107"/>
    </location>
</feature>
<feature type="glycosylation site" description="N-linked (GlcNAc...) asparagine" evidence="1">
    <location>
        <position position="113"/>
    </location>
</feature>
<feature type="glycosylation site" description="N-linked (GlcNAc...) asparagine" evidence="1">
    <location>
        <position position="128"/>
    </location>
</feature>
<feature type="glycosylation site" description="N-linked (GlcNAc...) asparagine" evidence="1">
    <location>
        <position position="151"/>
    </location>
</feature>
<feature type="glycosylation site" description="N-linked (GlcNAc...) asparagine" evidence="1">
    <location>
        <position position="175"/>
    </location>
</feature>
<feature type="glycosylation site" description="N-linked (GlcNAc...) asparagine" evidence="1">
    <location>
        <position position="190"/>
    </location>
</feature>
<feature type="glycosylation site" description="N-linked (GlcNAc...) asparagine" evidence="1">
    <location>
        <position position="208"/>
    </location>
</feature>
<feature type="glycosylation site" description="N-linked (GlcNAc...) asparagine" evidence="1">
    <location>
        <position position="337"/>
    </location>
</feature>
<feature type="glycosylation site" description="N-linked (GlcNAc...) asparagine" evidence="1">
    <location>
        <position position="429"/>
    </location>
</feature>
<feature type="glycosylation site" description="N-linked (GlcNAc...) asparagine" evidence="1">
    <location>
        <position position="511"/>
    </location>
</feature>
<feature type="glycosylation site" description="N-linked (GlcNAc...) asparagine" evidence="1">
    <location>
        <position position="527"/>
    </location>
</feature>
<feature type="glycosylation site" description="N-linked (GlcNAc...) asparagine" evidence="1">
    <location>
        <position position="641"/>
    </location>
</feature>
<feature type="glycosylation site" description="N-linked (GlcNAc...) asparagine" evidence="1">
    <location>
        <position position="648"/>
    </location>
</feature>
<protein>
    <recommendedName>
        <fullName>HIPL1 protein</fullName>
    </recommendedName>
</protein>
<keyword id="KW-1003">Cell membrane</keyword>
<keyword id="KW-0325">Glycoprotein</keyword>
<keyword id="KW-0336">GPI-anchor</keyword>
<keyword id="KW-0449">Lipoprotein</keyword>
<keyword id="KW-0472">Membrane</keyword>
<keyword id="KW-0560">Oxidoreductase</keyword>
<keyword id="KW-0634">PQQ</keyword>
<keyword id="KW-1185">Reference proteome</keyword>
<keyword id="KW-0732">Signal</keyword>
<proteinExistence type="inferred from homology"/>
<comment type="cofactor">
    <cofactor evidence="2">
        <name>pyrroloquinoline quinone</name>
        <dbReference type="ChEBI" id="CHEBI:58442"/>
    </cofactor>
</comment>
<comment type="subcellular location">
    <subcellularLocation>
        <location>Cell membrane</location>
        <topology>Lipid-anchor</topology>
        <topology>GPI-anchor</topology>
    </subcellularLocation>
</comment>
<comment type="similarity">
    <text evidence="2">Belongs to the PQQ oxidoreductase GdhB family.</text>
</comment>
<comment type="sequence caution" evidence="2">
    <conflict type="erroneous gene model prediction">
        <sequence resource="EMBL-CDS" id="AAD55298"/>
    </conflict>
</comment>
<organism>
    <name type="scientific">Arabidopsis thaliana</name>
    <name type="common">Mouse-ear cress</name>
    <dbReference type="NCBI Taxonomy" id="3702"/>
    <lineage>
        <taxon>Eukaryota</taxon>
        <taxon>Viridiplantae</taxon>
        <taxon>Streptophyta</taxon>
        <taxon>Embryophyta</taxon>
        <taxon>Tracheophyta</taxon>
        <taxon>Spermatophyta</taxon>
        <taxon>Magnoliopsida</taxon>
        <taxon>eudicotyledons</taxon>
        <taxon>Gunneridae</taxon>
        <taxon>Pentapetalae</taxon>
        <taxon>rosids</taxon>
        <taxon>malvids</taxon>
        <taxon>Brassicales</taxon>
        <taxon>Brassicaceae</taxon>
        <taxon>Camelineae</taxon>
        <taxon>Arabidopsis</taxon>
    </lineage>
</organism>
<gene>
    <name type="primary">HIPL1</name>
    <name type="ordered locus">At1g74790</name>
    <name type="ORF">F25A4.24</name>
</gene>
<reference key="1">
    <citation type="journal article" date="2000" name="Nature">
        <title>Sequence and analysis of chromosome 1 of the plant Arabidopsis thaliana.</title>
        <authorList>
            <person name="Theologis A."/>
            <person name="Ecker J.R."/>
            <person name="Palm C.J."/>
            <person name="Federspiel N.A."/>
            <person name="Kaul S."/>
            <person name="White O."/>
            <person name="Alonso J."/>
            <person name="Altafi H."/>
            <person name="Araujo R."/>
            <person name="Bowman C.L."/>
            <person name="Brooks S.Y."/>
            <person name="Buehler E."/>
            <person name="Chan A."/>
            <person name="Chao Q."/>
            <person name="Chen H."/>
            <person name="Cheuk R.F."/>
            <person name="Chin C.W."/>
            <person name="Chung M.K."/>
            <person name="Conn L."/>
            <person name="Conway A.B."/>
            <person name="Conway A.R."/>
            <person name="Creasy T.H."/>
            <person name="Dewar K."/>
            <person name="Dunn P."/>
            <person name="Etgu P."/>
            <person name="Feldblyum T.V."/>
            <person name="Feng J.-D."/>
            <person name="Fong B."/>
            <person name="Fujii C.Y."/>
            <person name="Gill J.E."/>
            <person name="Goldsmith A.D."/>
            <person name="Haas B."/>
            <person name="Hansen N.F."/>
            <person name="Hughes B."/>
            <person name="Huizar L."/>
            <person name="Hunter J.L."/>
            <person name="Jenkins J."/>
            <person name="Johnson-Hopson C."/>
            <person name="Khan S."/>
            <person name="Khaykin E."/>
            <person name="Kim C.J."/>
            <person name="Koo H.L."/>
            <person name="Kremenetskaia I."/>
            <person name="Kurtz D.B."/>
            <person name="Kwan A."/>
            <person name="Lam B."/>
            <person name="Langin-Hooper S."/>
            <person name="Lee A."/>
            <person name="Lee J.M."/>
            <person name="Lenz C.A."/>
            <person name="Li J.H."/>
            <person name="Li Y.-P."/>
            <person name="Lin X."/>
            <person name="Liu S.X."/>
            <person name="Liu Z.A."/>
            <person name="Luros J.S."/>
            <person name="Maiti R."/>
            <person name="Marziali A."/>
            <person name="Militscher J."/>
            <person name="Miranda M."/>
            <person name="Nguyen M."/>
            <person name="Nierman W.C."/>
            <person name="Osborne B.I."/>
            <person name="Pai G."/>
            <person name="Peterson J."/>
            <person name="Pham P.K."/>
            <person name="Rizzo M."/>
            <person name="Rooney T."/>
            <person name="Rowley D."/>
            <person name="Sakano H."/>
            <person name="Salzberg S.L."/>
            <person name="Schwartz J.R."/>
            <person name="Shinn P."/>
            <person name="Southwick A.M."/>
            <person name="Sun H."/>
            <person name="Tallon L.J."/>
            <person name="Tambunga G."/>
            <person name="Toriumi M.J."/>
            <person name="Town C.D."/>
            <person name="Utterback T."/>
            <person name="Van Aken S."/>
            <person name="Vaysberg M."/>
            <person name="Vysotskaia V.S."/>
            <person name="Walker M."/>
            <person name="Wu D."/>
            <person name="Yu G."/>
            <person name="Fraser C.M."/>
            <person name="Venter J.C."/>
            <person name="Davis R.W."/>
        </authorList>
    </citation>
    <scope>NUCLEOTIDE SEQUENCE [LARGE SCALE GENOMIC DNA]</scope>
    <source>
        <strain>cv. Columbia</strain>
    </source>
</reference>
<reference key="2">
    <citation type="journal article" date="2017" name="Plant J.">
        <title>Araport11: a complete reannotation of the Arabidopsis thaliana reference genome.</title>
        <authorList>
            <person name="Cheng C.Y."/>
            <person name="Krishnakumar V."/>
            <person name="Chan A.P."/>
            <person name="Thibaud-Nissen F."/>
            <person name="Schobel S."/>
            <person name="Town C.D."/>
        </authorList>
    </citation>
    <scope>GENOME REANNOTATION</scope>
    <source>
        <strain>cv. Columbia</strain>
    </source>
</reference>
<reference key="3">
    <citation type="unpublished observations" date="2003-07">
        <authorList>
            <person name="Haas B."/>
        </authorList>
    </citation>
    <scope>CONCEPTUAL TRANSLATION</scope>
</reference>
<accession>Q9SSG3</accession>
<evidence type="ECO:0000255" key="1"/>
<evidence type="ECO:0000305" key="2"/>
<sequence length="695" mass="75225">MKLHQFLVFLFLFLSCFALSSWALPLCSDSRAPSEVNSTLSFCPYKGKTCCNTMKDTSLMKQFQAMNISDKGCASVVKSILCANCDPFSSDLFRDNSDQQSVPILCNSTSSANSTENFCSETWETCQNVSISGSLFAASLQGRAGAPSNKNASKLADLWQSKTDFCSAFGGASSNETVCFSGEPVALNDNDTTPDKPPSGICLEKIGNGSYLNMVPHPDGSNRAFFSTQPGIVFLAGIPDQDSGGVLDVDPSSPFVDMTDEIHFDTEFGMMGMAFHPKFAQNGRFFASFNCDKSKWPGCTGRCSCNSDVNCDPSKLTPDSGSQPCQYQTVIAEYTANSTSSDPSKAKNAKPTEVRRIFTMGLPFTSHHAGQILFGPDGYLYFMMGDGGGGADPYNFAQNKKSLLGKIMRLDVDNIPSASEISKMGLWGNYSIPKDNPFREDKELEPEIWAVGLRNPWRCSFDSSRPSYFMCADVGQDTYEEVDLISKGGNYGWRVYEGPDLFHPESSPGGNTSVKSLNPIFPVMGYNHSEVDSSGKSASITGGYFYRSETDPCIAGRYVYADLYGNGVWAGIETPANSGSFVTKRTTFSCASDSPMKCSDSPGTSGLSLGYVFSFGEDNNKDIYLLTSNGVYRVVRPSRCNLTCSKENSTARRNPGTSSSPSSSSSSCYKHINGFHGSLVVLFVSLSLILLGLLN</sequence>